<organism evidence="8">
    <name type="scientific">Homo sapiens</name>
    <name type="common">Human</name>
    <dbReference type="NCBI Taxonomy" id="9606"/>
    <lineage>
        <taxon>Eukaryota</taxon>
        <taxon>Metazoa</taxon>
        <taxon>Chordata</taxon>
        <taxon>Craniata</taxon>
        <taxon>Vertebrata</taxon>
        <taxon>Euteleostomi</taxon>
        <taxon>Mammalia</taxon>
        <taxon>Eutheria</taxon>
        <taxon>Euarchontoglires</taxon>
        <taxon>Primates</taxon>
        <taxon>Haplorrhini</taxon>
        <taxon>Catarrhini</taxon>
        <taxon>Hominidae</taxon>
        <taxon>Homo</taxon>
    </lineage>
</organism>
<evidence type="ECO:0000250" key="1">
    <source>
        <dbReference type="UniProtKB" id="Q8K099"/>
    </source>
</evidence>
<evidence type="ECO:0000250" key="2">
    <source>
        <dbReference type="UniProtKB" id="Q9JMH2"/>
    </source>
</evidence>
<evidence type="ECO:0000255" key="3"/>
<evidence type="ECO:0000255" key="4">
    <source>
        <dbReference type="PROSITE-ProRule" id="PRU00114"/>
    </source>
</evidence>
<evidence type="ECO:0000255" key="5">
    <source>
        <dbReference type="PROSITE-ProRule" id="PRU00316"/>
    </source>
</evidence>
<evidence type="ECO:0000269" key="6">
    <source>
    </source>
</evidence>
<evidence type="ECO:0000305" key="7"/>
<evidence type="ECO:0000312" key="8">
    <source>
        <dbReference type="EMBL" id="BAA95681.1"/>
    </source>
</evidence>
<accession>Q9P2V4</accession>
<accession>Q0QD41</accession>
<accession>Q9Y4N7</accession>
<proteinExistence type="evidence at protein level"/>
<reference evidence="8" key="1">
    <citation type="journal article" date="2000" name="J. Neurosci.">
        <title>Molecular cloning of a novel membrane glycoprotein, Pal, specifically expressed in photoreceptor cells of the retina and containing leucine-rich repeat.</title>
        <authorList>
            <person name="Gomi F."/>
            <person name="Imaizumi K."/>
            <person name="Yoneda T."/>
            <person name="Taniguchi M."/>
            <person name="Mori Y."/>
            <person name="Miyoshi K."/>
            <person name="Hitomi J."/>
            <person name="Fujikado T."/>
            <person name="Tano Y."/>
            <person name="Tohyama M."/>
        </authorList>
    </citation>
    <scope>NUCLEOTIDE SEQUENCE [MRNA]</scope>
    <source>
        <tissue evidence="6">Retina</tissue>
    </source>
</reference>
<reference key="2">
    <citation type="journal article" date="2007" name="BMC Genomics">
        <title>Mapping of transcription start sites of human retina expressed genes.</title>
        <authorList>
            <person name="Roni V."/>
            <person name="Carpio R."/>
            <person name="Wissinger B."/>
        </authorList>
    </citation>
    <scope>NUCLEOTIDE SEQUENCE [LARGE SCALE MRNA] OF 1-10</scope>
    <source>
        <tissue>Retina</tissue>
    </source>
</reference>
<reference key="3">
    <citation type="journal article" date="2007" name="BMC Genomics">
        <title>The full-ORF clone resource of the German cDNA consortium.</title>
        <authorList>
            <person name="Bechtel S."/>
            <person name="Rosenfelder H."/>
            <person name="Duda A."/>
            <person name="Schmidt C.P."/>
            <person name="Ernst U."/>
            <person name="Wellenreuther R."/>
            <person name="Mehrle A."/>
            <person name="Schuster C."/>
            <person name="Bahr A."/>
            <person name="Bloecker H."/>
            <person name="Heubner D."/>
            <person name="Hoerlein A."/>
            <person name="Michel G."/>
            <person name="Wedler H."/>
            <person name="Koehrer K."/>
            <person name="Ottenwaelder B."/>
            <person name="Poustka A."/>
            <person name="Wiemann S."/>
            <person name="Schupp I."/>
        </authorList>
    </citation>
    <scope>NUCLEOTIDE SEQUENCE [LARGE SCALE MRNA] OF 303-623</scope>
    <source>
        <tissue>Testis</tissue>
    </source>
</reference>
<name>LRIT1_HUMAN</name>
<dbReference type="EMBL" id="AB031547">
    <property type="protein sequence ID" value="BAA95681.1"/>
    <property type="molecule type" value="mRNA"/>
</dbReference>
<dbReference type="EMBL" id="DQ426882">
    <property type="protein sequence ID" value="ABD90541.1"/>
    <property type="molecule type" value="mRNA"/>
</dbReference>
<dbReference type="EMBL" id="AL080175">
    <property type="protein sequence ID" value="CAB45761.1"/>
    <property type="molecule type" value="mRNA"/>
</dbReference>
<dbReference type="CCDS" id="CCDS7373.1"/>
<dbReference type="PIR" id="T12497">
    <property type="entry name" value="T12497"/>
</dbReference>
<dbReference type="RefSeq" id="NP_056428.1">
    <property type="nucleotide sequence ID" value="NM_015613.3"/>
</dbReference>
<dbReference type="SMR" id="Q9P2V4"/>
<dbReference type="BioGRID" id="117553">
    <property type="interactions" value="1"/>
</dbReference>
<dbReference type="FunCoup" id="Q9P2V4">
    <property type="interactions" value="20"/>
</dbReference>
<dbReference type="STRING" id="9606.ENSP00000361177"/>
<dbReference type="GlyCosmos" id="Q9P2V4">
    <property type="glycosylation" value="3 sites, No reported glycans"/>
</dbReference>
<dbReference type="GlyGen" id="Q9P2V4">
    <property type="glycosylation" value="4 sites, 1 O-linked glycan (1 site)"/>
</dbReference>
<dbReference type="iPTMnet" id="Q9P2V4"/>
<dbReference type="PhosphoSitePlus" id="Q9P2V4"/>
<dbReference type="BioMuta" id="LRIT1"/>
<dbReference type="DMDM" id="37081671"/>
<dbReference type="MassIVE" id="Q9P2V4"/>
<dbReference type="PaxDb" id="9606-ENSP00000361177"/>
<dbReference type="PeptideAtlas" id="Q9P2V4"/>
<dbReference type="ProteomicsDB" id="83900"/>
<dbReference type="Antibodypedia" id="48882">
    <property type="antibodies" value="60 antibodies from 12 providers"/>
</dbReference>
<dbReference type="DNASU" id="26103"/>
<dbReference type="Ensembl" id="ENST00000372105.4">
    <property type="protein sequence ID" value="ENSP00000361177.3"/>
    <property type="gene ID" value="ENSG00000148602.6"/>
</dbReference>
<dbReference type="GeneID" id="26103"/>
<dbReference type="KEGG" id="hsa:26103"/>
<dbReference type="MANE-Select" id="ENST00000372105.4">
    <property type="protein sequence ID" value="ENSP00000361177.3"/>
    <property type="RefSeq nucleotide sequence ID" value="NM_015613.3"/>
    <property type="RefSeq protein sequence ID" value="NP_056428.1"/>
</dbReference>
<dbReference type="UCSC" id="uc001kcz.2">
    <property type="organism name" value="human"/>
</dbReference>
<dbReference type="AGR" id="HGNC:23404"/>
<dbReference type="CTD" id="26103"/>
<dbReference type="DisGeNET" id="26103"/>
<dbReference type="GeneCards" id="LRIT1"/>
<dbReference type="HGNC" id="HGNC:23404">
    <property type="gene designation" value="LRIT1"/>
</dbReference>
<dbReference type="HPA" id="ENSG00000148602">
    <property type="expression patterns" value="Tissue enriched (retina)"/>
</dbReference>
<dbReference type="MIM" id="616103">
    <property type="type" value="gene"/>
</dbReference>
<dbReference type="neXtProt" id="NX_Q9P2V4"/>
<dbReference type="PharmGKB" id="PA162394331"/>
<dbReference type="VEuPathDB" id="HostDB:ENSG00000148602"/>
<dbReference type="eggNOG" id="KOG0619">
    <property type="taxonomic scope" value="Eukaryota"/>
</dbReference>
<dbReference type="eggNOG" id="KOG3510">
    <property type="taxonomic scope" value="Eukaryota"/>
</dbReference>
<dbReference type="GeneTree" id="ENSGT00940000156033"/>
<dbReference type="HOGENOM" id="CLU_019650_0_0_1"/>
<dbReference type="InParanoid" id="Q9P2V4"/>
<dbReference type="OMA" id="IVCVCVK"/>
<dbReference type="OrthoDB" id="9229163at2759"/>
<dbReference type="PAN-GO" id="Q9P2V4">
    <property type="GO annotations" value="1 GO annotation based on evolutionary models"/>
</dbReference>
<dbReference type="PhylomeDB" id="Q9P2V4"/>
<dbReference type="TreeFam" id="TF330861"/>
<dbReference type="PathwayCommons" id="Q9P2V4"/>
<dbReference type="BioGRID-ORCS" id="26103">
    <property type="hits" value="12 hits in 1143 CRISPR screens"/>
</dbReference>
<dbReference type="GenomeRNAi" id="26103"/>
<dbReference type="Pharos" id="Q9P2V4">
    <property type="development level" value="Tdark"/>
</dbReference>
<dbReference type="PRO" id="PR:Q9P2V4"/>
<dbReference type="Proteomes" id="UP000005640">
    <property type="component" value="Chromosome 10"/>
</dbReference>
<dbReference type="RNAct" id="Q9P2V4">
    <property type="molecule type" value="protein"/>
</dbReference>
<dbReference type="Bgee" id="ENSG00000148602">
    <property type="expression patterns" value="Expressed in male germ line stem cell (sensu Vertebrata) in testis and 4 other cell types or tissues"/>
</dbReference>
<dbReference type="GO" id="GO:0030425">
    <property type="term" value="C:dendrite"/>
    <property type="evidence" value="ECO:0007669"/>
    <property type="project" value="UniProtKB-SubCell"/>
</dbReference>
<dbReference type="GO" id="GO:0005789">
    <property type="term" value="C:endoplasmic reticulum membrane"/>
    <property type="evidence" value="ECO:0000250"/>
    <property type="project" value="UniProtKB"/>
</dbReference>
<dbReference type="GO" id="GO:0045202">
    <property type="term" value="C:synapse"/>
    <property type="evidence" value="ECO:0007669"/>
    <property type="project" value="Ensembl"/>
</dbReference>
<dbReference type="GO" id="GO:0043083">
    <property type="term" value="C:synaptic cleft"/>
    <property type="evidence" value="ECO:0007669"/>
    <property type="project" value="Ensembl"/>
</dbReference>
<dbReference type="GO" id="GO:0007602">
    <property type="term" value="P:phototransduction"/>
    <property type="evidence" value="ECO:0007669"/>
    <property type="project" value="Ensembl"/>
</dbReference>
<dbReference type="GO" id="GO:0099536">
    <property type="term" value="P:synaptic signaling"/>
    <property type="evidence" value="ECO:0007669"/>
    <property type="project" value="Ensembl"/>
</dbReference>
<dbReference type="GO" id="GO:0007601">
    <property type="term" value="P:visual perception"/>
    <property type="evidence" value="ECO:0007669"/>
    <property type="project" value="UniProtKB-KW"/>
</dbReference>
<dbReference type="CDD" id="cd00063">
    <property type="entry name" value="FN3"/>
    <property type="match status" value="1"/>
</dbReference>
<dbReference type="FunFam" id="3.80.10.10:FF:000058">
    <property type="entry name" value="immunoglobulin superfamily containing leucine-rich repeat protein 2"/>
    <property type="match status" value="1"/>
</dbReference>
<dbReference type="FunFam" id="2.60.40.10:FF:000744">
    <property type="entry name" value="Leucine rich repeat, Ig-like and transmembrane domains 1"/>
    <property type="match status" value="1"/>
</dbReference>
<dbReference type="FunFam" id="2.60.40.10:FF:000928">
    <property type="entry name" value="Leucine rich repeat, Ig-like and transmembrane domains 1"/>
    <property type="match status" value="1"/>
</dbReference>
<dbReference type="Gene3D" id="2.60.40.10">
    <property type="entry name" value="Immunoglobulins"/>
    <property type="match status" value="2"/>
</dbReference>
<dbReference type="Gene3D" id="3.80.10.10">
    <property type="entry name" value="Ribonuclease Inhibitor"/>
    <property type="match status" value="1"/>
</dbReference>
<dbReference type="InterPro" id="IPR000483">
    <property type="entry name" value="Cys-rich_flank_reg_C"/>
</dbReference>
<dbReference type="InterPro" id="IPR003961">
    <property type="entry name" value="FN3_dom"/>
</dbReference>
<dbReference type="InterPro" id="IPR036116">
    <property type="entry name" value="FN3_sf"/>
</dbReference>
<dbReference type="InterPro" id="IPR007110">
    <property type="entry name" value="Ig-like_dom"/>
</dbReference>
<dbReference type="InterPro" id="IPR036179">
    <property type="entry name" value="Ig-like_dom_sf"/>
</dbReference>
<dbReference type="InterPro" id="IPR013783">
    <property type="entry name" value="Ig-like_fold"/>
</dbReference>
<dbReference type="InterPro" id="IPR013098">
    <property type="entry name" value="Ig_I-set"/>
</dbReference>
<dbReference type="InterPro" id="IPR003599">
    <property type="entry name" value="Ig_sub"/>
</dbReference>
<dbReference type="InterPro" id="IPR003598">
    <property type="entry name" value="Ig_sub2"/>
</dbReference>
<dbReference type="InterPro" id="IPR001611">
    <property type="entry name" value="Leu-rich_rpt"/>
</dbReference>
<dbReference type="InterPro" id="IPR003591">
    <property type="entry name" value="Leu-rich_rpt_typical-subtyp"/>
</dbReference>
<dbReference type="InterPro" id="IPR050467">
    <property type="entry name" value="LRFN"/>
</dbReference>
<dbReference type="InterPro" id="IPR032675">
    <property type="entry name" value="LRR_dom_sf"/>
</dbReference>
<dbReference type="PANTHER" id="PTHR45842:SF9">
    <property type="entry name" value="LEUCINE-RICH REPEAT, IMMUNOGLOBULIN-LIKE DOMAIN AND TRANSMEMBRANE DOMAIN-CONTAINING PROTEIN 1"/>
    <property type="match status" value="1"/>
</dbReference>
<dbReference type="PANTHER" id="PTHR45842">
    <property type="entry name" value="SYNAPTIC ADHESION-LIKE MOLECULE SALM"/>
    <property type="match status" value="1"/>
</dbReference>
<dbReference type="Pfam" id="PF07679">
    <property type="entry name" value="I-set"/>
    <property type="match status" value="1"/>
</dbReference>
<dbReference type="Pfam" id="PF13855">
    <property type="entry name" value="LRR_8"/>
    <property type="match status" value="1"/>
</dbReference>
<dbReference type="SMART" id="SM00409">
    <property type="entry name" value="IG"/>
    <property type="match status" value="1"/>
</dbReference>
<dbReference type="SMART" id="SM00408">
    <property type="entry name" value="IGc2"/>
    <property type="match status" value="1"/>
</dbReference>
<dbReference type="SMART" id="SM00369">
    <property type="entry name" value="LRR_TYP"/>
    <property type="match status" value="4"/>
</dbReference>
<dbReference type="SMART" id="SM00082">
    <property type="entry name" value="LRRCT"/>
    <property type="match status" value="1"/>
</dbReference>
<dbReference type="SUPFAM" id="SSF49265">
    <property type="entry name" value="Fibronectin type III"/>
    <property type="match status" value="1"/>
</dbReference>
<dbReference type="SUPFAM" id="SSF48726">
    <property type="entry name" value="Immunoglobulin"/>
    <property type="match status" value="1"/>
</dbReference>
<dbReference type="SUPFAM" id="SSF52058">
    <property type="entry name" value="L domain-like"/>
    <property type="match status" value="1"/>
</dbReference>
<dbReference type="PROSITE" id="PS50853">
    <property type="entry name" value="FN3"/>
    <property type="match status" value="1"/>
</dbReference>
<dbReference type="PROSITE" id="PS50835">
    <property type="entry name" value="IG_LIKE"/>
    <property type="match status" value="1"/>
</dbReference>
<dbReference type="PROSITE" id="PS51450">
    <property type="entry name" value="LRR"/>
    <property type="match status" value="3"/>
</dbReference>
<comment type="function">
    <text evidence="1">Photoreceptor synaptic protein essential for normal vision (By similarity). Involved in synapse formation in cone photoreceptor cells (By similarity).</text>
</comment>
<comment type="subunit">
    <text evidence="1">May form a homodimer (By similarity). Interacts with LRIT2; may form a heterodimer with LRIT2 (By similarity). Interacts (via its N-terminal extracellular domain) with metabotropic glutamate receptor GRM6 (By similarity). Interacts (via its extreme C-terminus) with the scaffold protein FRMPD2 (via the third PDZ domain); the interaction leads to their colocalization in photoreceptor synapses (By similarity).</text>
</comment>
<comment type="subcellular location">
    <subcellularLocation>
        <location evidence="2">Endoplasmic reticulum membrane</location>
        <topology evidence="2">Single-pass type I membrane protein</topology>
    </subcellularLocation>
    <subcellularLocation>
        <location evidence="1">Cell projection</location>
        <location evidence="1">Dendrite</location>
    </subcellularLocation>
</comment>
<feature type="signal peptide" evidence="3">
    <location>
        <begin position="1"/>
        <end position="21"/>
    </location>
</feature>
<feature type="chain" id="PRO_0000014835" description="Leucine-rich repeat, immunoglobulin-like domain and transmembrane domain-containing protein 1">
    <location>
        <begin position="22"/>
        <end position="623"/>
    </location>
</feature>
<feature type="topological domain" description="Lumenal" evidence="3">
    <location>
        <begin position="22"/>
        <end position="526"/>
    </location>
</feature>
<feature type="transmembrane region" description="Helical" evidence="3">
    <location>
        <begin position="527"/>
        <end position="547"/>
    </location>
</feature>
<feature type="topological domain" description="Cytoplasmic" evidence="3">
    <location>
        <begin position="548"/>
        <end position="623"/>
    </location>
</feature>
<feature type="domain" description="LRRNT">
    <location>
        <begin position="22"/>
        <end position="59"/>
    </location>
</feature>
<feature type="repeat" description="LRR 1">
    <location>
        <begin position="60"/>
        <end position="81"/>
    </location>
</feature>
<feature type="repeat" description="LRR 2">
    <location>
        <begin position="84"/>
        <end position="105"/>
    </location>
</feature>
<feature type="repeat" description="LRR 3">
    <location>
        <begin position="108"/>
        <end position="129"/>
    </location>
</feature>
<feature type="repeat" description="LRR 4">
    <location>
        <begin position="132"/>
        <end position="153"/>
    </location>
</feature>
<feature type="repeat" description="LRR 5">
    <location>
        <begin position="156"/>
        <end position="177"/>
    </location>
</feature>
<feature type="domain" description="LRRCT">
    <location>
        <begin position="201"/>
        <end position="253"/>
    </location>
</feature>
<feature type="domain" description="Ig-like C2-type">
    <location>
        <begin position="266"/>
        <end position="335"/>
    </location>
</feature>
<feature type="domain" description="Fibronectin type-III" evidence="5">
    <location>
        <begin position="430"/>
        <end position="518"/>
    </location>
</feature>
<feature type="repeat" description="LRR 6" evidence="7">
    <location>
        <begin position="571"/>
        <end position="594"/>
    </location>
</feature>
<feature type="glycosylation site" description="N-linked (GlcNAc...) asparagine" evidence="3">
    <location>
        <position position="156"/>
    </location>
</feature>
<feature type="glycosylation site" description="N-linked (GlcNAc...) asparagine" evidence="3">
    <location>
        <position position="296"/>
    </location>
</feature>
<feature type="glycosylation site" description="N-linked (GlcNAc...) asparagine" evidence="3">
    <location>
        <position position="455"/>
    </location>
</feature>
<feature type="disulfide bond" evidence="4">
    <location>
        <begin position="275"/>
        <end position="328"/>
    </location>
</feature>
<feature type="sequence variant" id="VAR_049891" description="In dbSNP:rs11200933.">
    <original>L</original>
    <variation>M</variation>
    <location>
        <position position="154"/>
    </location>
</feature>
<feature type="sequence variant" id="VAR_049892" description="In dbSNP:rs7090059.">
    <original>P</original>
    <variation>Q</variation>
    <location>
        <position position="258"/>
    </location>
</feature>
<feature type="sequence variant" id="VAR_049893" description="In dbSNP:rs12262099.">
    <original>P</original>
    <variation>T</variation>
    <location>
        <position position="389"/>
    </location>
</feature>
<feature type="sequence variant" id="VAR_020081" description="In dbSNP:rs3814211.">
    <original>S</original>
    <variation>G</variation>
    <location>
        <position position="591"/>
    </location>
</feature>
<sequence length="623" mass="68041">MRVALGMLWLLALAWPPQARGFCPSQCSCSLHIMGDGSKARTVVCNDPDMTLPPASIPPDTSRLRLERTAIRRVPGEAFRPLGRLEQLWLPYNALSELNALMLRGLRRLRELRLPGNRLAAFPWAALRDAPKLRLLDLQANRLSAVPAEAARFLENLTFLDLSSNQLMRLPQELIVSWAHLETGIFPPGHHPRRVLGLQDNPWACDCRLYDLVHLLDGWAPNLAFIETELRCASPRSLAGVAFSQLELRKCQGPELHPGVASIRSLLGGTALLRCGATGVPGPEMSWRRANGRPLNGTVHQEVSSDGTSWTLLGLPAVSHLDSGDYICQAKNFLGASETVISLIVTEPPTSTEHSGSPGALWARTGGGGEAAAYNNKLVARHVPQIPKPAVLATGPSVPSTKEELTLEHFQMDALGELSDGRAGPSEARMVRSVKVVGDTYHSVSLVWKAPQAKNTTAFSVLYAVFGQHSMRRVIVQPGKTRVTITGLLPKTKYVACVCVQGLVPRKEQCVIFSTNEVVDAENTQQLINVVVISVAIVIALPLTLLVCCSALQKRCRKCFNKDSTEATVTYVNLERLGYSEDGLEELSRHSVSEADRLLSARSSVDFQAFGVKGGRRINEYFC</sequence>
<gene>
    <name type="primary">LRIT1</name>
    <name type="synonym">LRRC21</name>
    <name type="synonym">PAL</name>
</gene>
<keyword id="KW-0966">Cell projection</keyword>
<keyword id="KW-1015">Disulfide bond</keyword>
<keyword id="KW-0256">Endoplasmic reticulum</keyword>
<keyword id="KW-0325">Glycoprotein</keyword>
<keyword id="KW-0393">Immunoglobulin domain</keyword>
<keyword id="KW-0433">Leucine-rich repeat</keyword>
<keyword id="KW-0472">Membrane</keyword>
<keyword id="KW-1267">Proteomics identification</keyword>
<keyword id="KW-1185">Reference proteome</keyword>
<keyword id="KW-0677">Repeat</keyword>
<keyword id="KW-0716">Sensory transduction</keyword>
<keyword id="KW-0732">Signal</keyword>
<keyword id="KW-0812">Transmembrane</keyword>
<keyword id="KW-1133">Transmembrane helix</keyword>
<keyword id="KW-0844">Vision</keyword>
<protein>
    <recommendedName>
        <fullName>Leucine-rich repeat, immunoglobulin-like domain and transmembrane domain-containing protein 1</fullName>
    </recommendedName>
    <alternativeName>
        <fullName>Leucine-rich repeat-containing protein 21</fullName>
    </alternativeName>
    <alternativeName>
        <fullName>Photoreceptor-associated LRR superfamily protein</fullName>
    </alternativeName>
    <alternativeName>
        <fullName>Retina-specific protein PAL</fullName>
    </alternativeName>
</protein>